<feature type="chain" id="PRO_1000190921" description="Ketol-acid reductoisomerase (NADP(+))">
    <location>
        <begin position="1"/>
        <end position="338"/>
    </location>
</feature>
<feature type="domain" description="KARI N-terminal Rossmann" evidence="2">
    <location>
        <begin position="1"/>
        <end position="181"/>
    </location>
</feature>
<feature type="domain" description="KARI C-terminal knotted" evidence="3">
    <location>
        <begin position="182"/>
        <end position="327"/>
    </location>
</feature>
<feature type="active site" evidence="1">
    <location>
        <position position="107"/>
    </location>
</feature>
<feature type="binding site" evidence="1">
    <location>
        <begin position="24"/>
        <end position="27"/>
    </location>
    <ligand>
        <name>NADP(+)</name>
        <dbReference type="ChEBI" id="CHEBI:58349"/>
    </ligand>
</feature>
<feature type="binding site" evidence="1">
    <location>
        <position position="47"/>
    </location>
    <ligand>
        <name>NADP(+)</name>
        <dbReference type="ChEBI" id="CHEBI:58349"/>
    </ligand>
</feature>
<feature type="binding site" evidence="1">
    <location>
        <position position="52"/>
    </location>
    <ligand>
        <name>NADP(+)</name>
        <dbReference type="ChEBI" id="CHEBI:58349"/>
    </ligand>
</feature>
<feature type="binding site" evidence="1">
    <location>
        <position position="133"/>
    </location>
    <ligand>
        <name>NADP(+)</name>
        <dbReference type="ChEBI" id="CHEBI:58349"/>
    </ligand>
</feature>
<feature type="binding site" evidence="1">
    <location>
        <position position="190"/>
    </location>
    <ligand>
        <name>Mg(2+)</name>
        <dbReference type="ChEBI" id="CHEBI:18420"/>
        <label>1</label>
    </ligand>
</feature>
<feature type="binding site" evidence="1">
    <location>
        <position position="190"/>
    </location>
    <ligand>
        <name>Mg(2+)</name>
        <dbReference type="ChEBI" id="CHEBI:18420"/>
        <label>2</label>
    </ligand>
</feature>
<feature type="binding site" evidence="1">
    <location>
        <position position="194"/>
    </location>
    <ligand>
        <name>Mg(2+)</name>
        <dbReference type="ChEBI" id="CHEBI:18420"/>
        <label>1</label>
    </ligand>
</feature>
<feature type="binding site" evidence="1">
    <location>
        <position position="226"/>
    </location>
    <ligand>
        <name>Mg(2+)</name>
        <dbReference type="ChEBI" id="CHEBI:18420"/>
        <label>2</label>
    </ligand>
</feature>
<feature type="binding site" evidence="1">
    <location>
        <position position="230"/>
    </location>
    <ligand>
        <name>Mg(2+)</name>
        <dbReference type="ChEBI" id="CHEBI:18420"/>
        <label>2</label>
    </ligand>
</feature>
<feature type="binding site" evidence="1">
    <location>
        <position position="251"/>
    </location>
    <ligand>
        <name>substrate</name>
    </ligand>
</feature>
<dbReference type="EC" id="1.1.1.86" evidence="1"/>
<dbReference type="EMBL" id="AM747720">
    <property type="protein sequence ID" value="CAR52658.1"/>
    <property type="molecule type" value="Genomic_DNA"/>
</dbReference>
<dbReference type="RefSeq" id="WP_006491032.1">
    <property type="nucleotide sequence ID" value="NC_011000.1"/>
</dbReference>
<dbReference type="SMR" id="B4E5N5"/>
<dbReference type="GeneID" id="56558855"/>
<dbReference type="KEGG" id="bcj:BCAL2357"/>
<dbReference type="eggNOG" id="COG0059">
    <property type="taxonomic scope" value="Bacteria"/>
</dbReference>
<dbReference type="HOGENOM" id="CLU_033821_0_1_4"/>
<dbReference type="BioCyc" id="BCEN216591:G1G1V-2603-MONOMER"/>
<dbReference type="UniPathway" id="UPA00047">
    <property type="reaction ID" value="UER00056"/>
</dbReference>
<dbReference type="UniPathway" id="UPA00049">
    <property type="reaction ID" value="UER00060"/>
</dbReference>
<dbReference type="Proteomes" id="UP000001035">
    <property type="component" value="Chromosome 1"/>
</dbReference>
<dbReference type="GO" id="GO:0005829">
    <property type="term" value="C:cytosol"/>
    <property type="evidence" value="ECO:0007669"/>
    <property type="project" value="TreeGrafter"/>
</dbReference>
<dbReference type="GO" id="GO:0004455">
    <property type="term" value="F:ketol-acid reductoisomerase activity"/>
    <property type="evidence" value="ECO:0007669"/>
    <property type="project" value="UniProtKB-UniRule"/>
</dbReference>
<dbReference type="GO" id="GO:0000287">
    <property type="term" value="F:magnesium ion binding"/>
    <property type="evidence" value="ECO:0007669"/>
    <property type="project" value="UniProtKB-UniRule"/>
</dbReference>
<dbReference type="GO" id="GO:0050661">
    <property type="term" value="F:NADP binding"/>
    <property type="evidence" value="ECO:0007669"/>
    <property type="project" value="InterPro"/>
</dbReference>
<dbReference type="GO" id="GO:0009097">
    <property type="term" value="P:isoleucine biosynthetic process"/>
    <property type="evidence" value="ECO:0007669"/>
    <property type="project" value="UniProtKB-UniRule"/>
</dbReference>
<dbReference type="GO" id="GO:0009099">
    <property type="term" value="P:L-valine biosynthetic process"/>
    <property type="evidence" value="ECO:0007669"/>
    <property type="project" value="UniProtKB-UniRule"/>
</dbReference>
<dbReference type="FunFam" id="3.40.50.720:FF:000023">
    <property type="entry name" value="Ketol-acid reductoisomerase (NADP(+))"/>
    <property type="match status" value="1"/>
</dbReference>
<dbReference type="Gene3D" id="6.10.240.10">
    <property type="match status" value="1"/>
</dbReference>
<dbReference type="Gene3D" id="3.40.50.720">
    <property type="entry name" value="NAD(P)-binding Rossmann-like Domain"/>
    <property type="match status" value="1"/>
</dbReference>
<dbReference type="HAMAP" id="MF_00435">
    <property type="entry name" value="IlvC"/>
    <property type="match status" value="1"/>
</dbReference>
<dbReference type="InterPro" id="IPR008927">
    <property type="entry name" value="6-PGluconate_DH-like_C_sf"/>
</dbReference>
<dbReference type="InterPro" id="IPR013023">
    <property type="entry name" value="KARI"/>
</dbReference>
<dbReference type="InterPro" id="IPR000506">
    <property type="entry name" value="KARI_C"/>
</dbReference>
<dbReference type="InterPro" id="IPR013116">
    <property type="entry name" value="KARI_N"/>
</dbReference>
<dbReference type="InterPro" id="IPR014359">
    <property type="entry name" value="KARI_prok"/>
</dbReference>
<dbReference type="InterPro" id="IPR036291">
    <property type="entry name" value="NAD(P)-bd_dom_sf"/>
</dbReference>
<dbReference type="NCBIfam" id="TIGR00465">
    <property type="entry name" value="ilvC"/>
    <property type="match status" value="1"/>
</dbReference>
<dbReference type="NCBIfam" id="NF004017">
    <property type="entry name" value="PRK05479.1"/>
    <property type="match status" value="1"/>
</dbReference>
<dbReference type="NCBIfam" id="NF009940">
    <property type="entry name" value="PRK13403.1"/>
    <property type="match status" value="1"/>
</dbReference>
<dbReference type="PANTHER" id="PTHR21371">
    <property type="entry name" value="KETOL-ACID REDUCTOISOMERASE, MITOCHONDRIAL"/>
    <property type="match status" value="1"/>
</dbReference>
<dbReference type="PANTHER" id="PTHR21371:SF1">
    <property type="entry name" value="KETOL-ACID REDUCTOISOMERASE, MITOCHONDRIAL"/>
    <property type="match status" value="1"/>
</dbReference>
<dbReference type="Pfam" id="PF01450">
    <property type="entry name" value="KARI_C"/>
    <property type="match status" value="1"/>
</dbReference>
<dbReference type="Pfam" id="PF07991">
    <property type="entry name" value="KARI_N"/>
    <property type="match status" value="1"/>
</dbReference>
<dbReference type="PIRSF" id="PIRSF000116">
    <property type="entry name" value="IlvC_gammaproteo"/>
    <property type="match status" value="1"/>
</dbReference>
<dbReference type="SUPFAM" id="SSF48179">
    <property type="entry name" value="6-phosphogluconate dehydrogenase C-terminal domain-like"/>
    <property type="match status" value="1"/>
</dbReference>
<dbReference type="SUPFAM" id="SSF51735">
    <property type="entry name" value="NAD(P)-binding Rossmann-fold domains"/>
    <property type="match status" value="1"/>
</dbReference>
<dbReference type="PROSITE" id="PS51851">
    <property type="entry name" value="KARI_C"/>
    <property type="match status" value="1"/>
</dbReference>
<dbReference type="PROSITE" id="PS51850">
    <property type="entry name" value="KARI_N"/>
    <property type="match status" value="1"/>
</dbReference>
<keyword id="KW-0028">Amino-acid biosynthesis</keyword>
<keyword id="KW-0100">Branched-chain amino acid biosynthesis</keyword>
<keyword id="KW-0460">Magnesium</keyword>
<keyword id="KW-0479">Metal-binding</keyword>
<keyword id="KW-0521">NADP</keyword>
<keyword id="KW-0560">Oxidoreductase</keyword>
<comment type="function">
    <text evidence="1">Involved in the biosynthesis of branched-chain amino acids (BCAA). Catalyzes an alkyl-migration followed by a ketol-acid reduction of (S)-2-acetolactate (S2AL) to yield (R)-2,3-dihydroxy-isovalerate. In the isomerase reaction, S2AL is rearranged via a Mg-dependent methyl migration to produce 3-hydroxy-3-methyl-2-ketobutyrate (HMKB). In the reductase reaction, this 2-ketoacid undergoes a metal-dependent reduction by NADPH to yield (R)-2,3-dihydroxy-isovalerate.</text>
</comment>
<comment type="catalytic activity">
    <reaction evidence="1">
        <text>(2R)-2,3-dihydroxy-3-methylbutanoate + NADP(+) = (2S)-2-acetolactate + NADPH + H(+)</text>
        <dbReference type="Rhea" id="RHEA:22068"/>
        <dbReference type="ChEBI" id="CHEBI:15378"/>
        <dbReference type="ChEBI" id="CHEBI:49072"/>
        <dbReference type="ChEBI" id="CHEBI:57783"/>
        <dbReference type="ChEBI" id="CHEBI:58349"/>
        <dbReference type="ChEBI" id="CHEBI:58476"/>
        <dbReference type="EC" id="1.1.1.86"/>
    </reaction>
</comment>
<comment type="catalytic activity">
    <reaction evidence="1">
        <text>(2R,3R)-2,3-dihydroxy-3-methylpentanoate + NADP(+) = (S)-2-ethyl-2-hydroxy-3-oxobutanoate + NADPH + H(+)</text>
        <dbReference type="Rhea" id="RHEA:13493"/>
        <dbReference type="ChEBI" id="CHEBI:15378"/>
        <dbReference type="ChEBI" id="CHEBI:49256"/>
        <dbReference type="ChEBI" id="CHEBI:49258"/>
        <dbReference type="ChEBI" id="CHEBI:57783"/>
        <dbReference type="ChEBI" id="CHEBI:58349"/>
        <dbReference type="EC" id="1.1.1.86"/>
    </reaction>
</comment>
<comment type="cofactor">
    <cofactor evidence="1">
        <name>Mg(2+)</name>
        <dbReference type="ChEBI" id="CHEBI:18420"/>
    </cofactor>
    <text evidence="1">Binds 2 magnesium ions per subunit.</text>
</comment>
<comment type="pathway">
    <text evidence="1">Amino-acid biosynthesis; L-isoleucine biosynthesis; L-isoleucine from 2-oxobutanoate: step 2/4.</text>
</comment>
<comment type="pathway">
    <text evidence="1">Amino-acid biosynthesis; L-valine biosynthesis; L-valine from pyruvate: step 2/4.</text>
</comment>
<comment type="similarity">
    <text evidence="1">Belongs to the ketol-acid reductoisomerase family.</text>
</comment>
<name>ILVC_BURCJ</name>
<organism>
    <name type="scientific">Burkholderia cenocepacia (strain ATCC BAA-245 / DSM 16553 / LMG 16656 / NCTC 13227 / J2315 / CF5610)</name>
    <name type="common">Burkholderia cepacia (strain J2315)</name>
    <dbReference type="NCBI Taxonomy" id="216591"/>
    <lineage>
        <taxon>Bacteria</taxon>
        <taxon>Pseudomonadati</taxon>
        <taxon>Pseudomonadota</taxon>
        <taxon>Betaproteobacteria</taxon>
        <taxon>Burkholderiales</taxon>
        <taxon>Burkholderiaceae</taxon>
        <taxon>Burkholderia</taxon>
        <taxon>Burkholderia cepacia complex</taxon>
    </lineage>
</organism>
<gene>
    <name evidence="1" type="primary">ilvC</name>
    <name type="ordered locus">BceJ2315_23170</name>
    <name type="ORF">BCAL2357</name>
</gene>
<sequence length="338" mass="36268">MNVFYDKDADLSLIKGKQVTIIGYGSQGHAHALNLKDSGVNVTVGLRKGGASWSKAENAGLSVKEVAEAVKGADVVMMLLPDEQIADVYAKEVHANIKQGAALAFAHGFNVHYGAVIPRADLDVIMIAPKAPGHTVRGTYSQGGGVPHLIAVAQNKSGAARDIALSYAAANGGGRAGIIETNFREETETDLFGEQAVLCGGTVELIKAGFETLVEAGYAPEMAYFECLHELKLIVDLIYEGGIANMNYSISNNAEYGEYVTGPRIVTEETKKAMKQCLTDIQTGEYAKSFILENKAGAPTLQSRRRLTAEHQIEQVGAKLRAMMPWIAKNKLVDQTKN</sequence>
<reference key="1">
    <citation type="journal article" date="2009" name="J. Bacteriol.">
        <title>The genome of Burkholderia cenocepacia J2315, an epidemic pathogen of cystic fibrosis patients.</title>
        <authorList>
            <person name="Holden M.T."/>
            <person name="Seth-Smith H.M."/>
            <person name="Crossman L.C."/>
            <person name="Sebaihia M."/>
            <person name="Bentley S.D."/>
            <person name="Cerdeno-Tarraga A.M."/>
            <person name="Thomson N.R."/>
            <person name="Bason N."/>
            <person name="Quail M.A."/>
            <person name="Sharp S."/>
            <person name="Cherevach I."/>
            <person name="Churcher C."/>
            <person name="Goodhead I."/>
            <person name="Hauser H."/>
            <person name="Holroyd N."/>
            <person name="Mungall K."/>
            <person name="Scott P."/>
            <person name="Walker D."/>
            <person name="White B."/>
            <person name="Rose H."/>
            <person name="Iversen P."/>
            <person name="Mil-Homens D."/>
            <person name="Rocha E.P."/>
            <person name="Fialho A.M."/>
            <person name="Baldwin A."/>
            <person name="Dowson C."/>
            <person name="Barrell B.G."/>
            <person name="Govan J.R."/>
            <person name="Vandamme P."/>
            <person name="Hart C.A."/>
            <person name="Mahenthiralingam E."/>
            <person name="Parkhill J."/>
        </authorList>
    </citation>
    <scope>NUCLEOTIDE SEQUENCE [LARGE SCALE GENOMIC DNA]</scope>
    <source>
        <strain>ATCC BAA-245 / DSM 16553 / LMG 16656 / NCTC 13227 / J2315 / CF5610</strain>
    </source>
</reference>
<evidence type="ECO:0000255" key="1">
    <source>
        <dbReference type="HAMAP-Rule" id="MF_00435"/>
    </source>
</evidence>
<evidence type="ECO:0000255" key="2">
    <source>
        <dbReference type="PROSITE-ProRule" id="PRU01197"/>
    </source>
</evidence>
<evidence type="ECO:0000255" key="3">
    <source>
        <dbReference type="PROSITE-ProRule" id="PRU01198"/>
    </source>
</evidence>
<proteinExistence type="inferred from homology"/>
<accession>B4E5N5</accession>
<protein>
    <recommendedName>
        <fullName evidence="1">Ketol-acid reductoisomerase (NADP(+))</fullName>
        <shortName evidence="1">KARI</shortName>
        <ecNumber evidence="1">1.1.1.86</ecNumber>
    </recommendedName>
    <alternativeName>
        <fullName evidence="1">Acetohydroxy-acid isomeroreductase</fullName>
        <shortName evidence="1">AHIR</shortName>
    </alternativeName>
    <alternativeName>
        <fullName evidence="1">Alpha-keto-beta-hydroxylacyl reductoisomerase</fullName>
    </alternativeName>
    <alternativeName>
        <fullName evidence="1">Ketol-acid reductoisomerase type 1</fullName>
    </alternativeName>
    <alternativeName>
        <fullName evidence="1">Ketol-acid reductoisomerase type I</fullName>
    </alternativeName>
</protein>